<evidence type="ECO:0000255" key="1">
    <source>
        <dbReference type="HAMAP-Rule" id="MF_01436"/>
    </source>
</evidence>
<name>ENTS_ECO57</name>
<protein>
    <recommendedName>
        <fullName evidence="1">Enterobactin exporter EntS</fullName>
    </recommendedName>
</protein>
<comment type="function">
    <text evidence="1">Component of an export pathway for enterobactin.</text>
</comment>
<comment type="subcellular location">
    <subcellularLocation>
        <location evidence="1">Cell inner membrane</location>
        <topology evidence="1">Multi-pass membrane protein</topology>
    </subcellularLocation>
</comment>
<comment type="similarity">
    <text evidence="1">Belongs to the major facilitator superfamily. EntS (TC 2.A.1.38) family.</text>
</comment>
<dbReference type="EMBL" id="BA000007">
    <property type="protein sequence ID" value="BAB34053.1"/>
    <property type="molecule type" value="Genomic_DNA"/>
</dbReference>
<dbReference type="EMBL" id="AE005174">
    <property type="protein sequence ID" value="AAG54926.1"/>
    <property type="molecule type" value="Genomic_DNA"/>
</dbReference>
<dbReference type="PIR" id="B85558">
    <property type="entry name" value="B85558"/>
</dbReference>
<dbReference type="PIR" id="F90707">
    <property type="entry name" value="F90707"/>
</dbReference>
<dbReference type="RefSeq" id="NP_308657.1">
    <property type="nucleotide sequence ID" value="NC_002695.1"/>
</dbReference>
<dbReference type="RefSeq" id="WP_001041788.1">
    <property type="nucleotide sequence ID" value="NZ_VOAI01000012.1"/>
</dbReference>
<dbReference type="SMR" id="Q8X534"/>
<dbReference type="STRING" id="155864.Z0733"/>
<dbReference type="GeneID" id="916989"/>
<dbReference type="KEGG" id="ece:Z0733"/>
<dbReference type="KEGG" id="ecs:ECs_0630"/>
<dbReference type="PATRIC" id="fig|386585.9.peg.740"/>
<dbReference type="eggNOG" id="COG0477">
    <property type="taxonomic scope" value="Bacteria"/>
</dbReference>
<dbReference type="HOGENOM" id="CLU_034180_11_0_6"/>
<dbReference type="OMA" id="VQVWHVY"/>
<dbReference type="Proteomes" id="UP000000558">
    <property type="component" value="Chromosome"/>
</dbReference>
<dbReference type="Proteomes" id="UP000002519">
    <property type="component" value="Chromosome"/>
</dbReference>
<dbReference type="GO" id="GO:0005886">
    <property type="term" value="C:plasma membrane"/>
    <property type="evidence" value="ECO:0007669"/>
    <property type="project" value="UniProtKB-SubCell"/>
</dbReference>
<dbReference type="GO" id="GO:0042931">
    <property type="term" value="F:enterobactin transmembrane transporter activity"/>
    <property type="evidence" value="ECO:0007669"/>
    <property type="project" value="InterPro"/>
</dbReference>
<dbReference type="CDD" id="cd06173">
    <property type="entry name" value="MFS_MefA_like"/>
    <property type="match status" value="1"/>
</dbReference>
<dbReference type="FunFam" id="1.20.1250.20:FF:000056">
    <property type="entry name" value="Enterobactin exporter EntS"/>
    <property type="match status" value="1"/>
</dbReference>
<dbReference type="Gene3D" id="1.20.1250.20">
    <property type="entry name" value="MFS general substrate transporter like domains"/>
    <property type="match status" value="1"/>
</dbReference>
<dbReference type="HAMAP" id="MF_01436">
    <property type="entry name" value="MFS_EntS"/>
    <property type="match status" value="1"/>
</dbReference>
<dbReference type="InterPro" id="IPR023722">
    <property type="entry name" value="Enterobactin_exp_EntS"/>
</dbReference>
<dbReference type="InterPro" id="IPR020846">
    <property type="entry name" value="MFS_dom"/>
</dbReference>
<dbReference type="InterPro" id="IPR036259">
    <property type="entry name" value="MFS_trans_sf"/>
</dbReference>
<dbReference type="InterPro" id="IPR010290">
    <property type="entry name" value="TM_effector"/>
</dbReference>
<dbReference type="NCBIfam" id="NF007792">
    <property type="entry name" value="PRK10489.1"/>
    <property type="match status" value="1"/>
</dbReference>
<dbReference type="PANTHER" id="PTHR23513:SF9">
    <property type="entry name" value="ENTEROBACTIN EXPORTER ENTS"/>
    <property type="match status" value="1"/>
</dbReference>
<dbReference type="PANTHER" id="PTHR23513">
    <property type="entry name" value="INTEGRAL MEMBRANE EFFLUX PROTEIN-RELATED"/>
    <property type="match status" value="1"/>
</dbReference>
<dbReference type="Pfam" id="PF05977">
    <property type="entry name" value="MFS_3"/>
    <property type="match status" value="1"/>
</dbReference>
<dbReference type="SUPFAM" id="SSF103473">
    <property type="entry name" value="MFS general substrate transporter"/>
    <property type="match status" value="1"/>
</dbReference>
<dbReference type="PROSITE" id="PS50850">
    <property type="entry name" value="MFS"/>
    <property type="match status" value="1"/>
</dbReference>
<organism>
    <name type="scientific">Escherichia coli O157:H7</name>
    <dbReference type="NCBI Taxonomy" id="83334"/>
    <lineage>
        <taxon>Bacteria</taxon>
        <taxon>Pseudomonadati</taxon>
        <taxon>Pseudomonadota</taxon>
        <taxon>Gammaproteobacteria</taxon>
        <taxon>Enterobacterales</taxon>
        <taxon>Enterobacteriaceae</taxon>
        <taxon>Escherichia</taxon>
    </lineage>
</organism>
<sequence>MNKQSWLLNLSLLKTHPAFRAVFLARFISIVSLGLLGVAVPVQIQMMTHSTWQVGLSVTLTGGAMFVGLMVGGVLADRYERKKVILLARGTCGIGFIGLCLNALLPEPSLLAIYLLGLWDGFFASLGVTALLAATPALVGRENLMQAGAITMLTVRLGSVISPMIGGLLLATGGVAWNYGLAAAGTFITLLPLLSLPALPPPPQPREHPLKSLLAGFRFLLASPLVGGIALLGGLLTMASAVRVLYPALADNWQMSAAQIGFLYAAIPLGAAIGALTSGKLAHSARPGLLMLLSTLGSFLAIGLFGLMPMWILGVVCLALFGWLSAVSSLLQYTMLQTQTPEAMLGRINGLWTAQNVTGDAIGAALLGGLGAMMTPVASASASGFGLLIIGVLLLLVLVELRRFRQTPPQVTASDG</sequence>
<proteinExistence type="inferred from homology"/>
<gene>
    <name evidence="1" type="primary">entS</name>
    <name type="ordered locus">Z0733</name>
    <name type="ordered locus">ECs0630</name>
</gene>
<reference key="1">
    <citation type="journal article" date="2001" name="Nature">
        <title>Genome sequence of enterohaemorrhagic Escherichia coli O157:H7.</title>
        <authorList>
            <person name="Perna N.T."/>
            <person name="Plunkett G. III"/>
            <person name="Burland V."/>
            <person name="Mau B."/>
            <person name="Glasner J.D."/>
            <person name="Rose D.J."/>
            <person name="Mayhew G.F."/>
            <person name="Evans P.S."/>
            <person name="Gregor J."/>
            <person name="Kirkpatrick H.A."/>
            <person name="Posfai G."/>
            <person name="Hackett J."/>
            <person name="Klink S."/>
            <person name="Boutin A."/>
            <person name="Shao Y."/>
            <person name="Miller L."/>
            <person name="Grotbeck E.J."/>
            <person name="Davis N.W."/>
            <person name="Lim A."/>
            <person name="Dimalanta E.T."/>
            <person name="Potamousis K."/>
            <person name="Apodaca J."/>
            <person name="Anantharaman T.S."/>
            <person name="Lin J."/>
            <person name="Yen G."/>
            <person name="Schwartz D.C."/>
            <person name="Welch R.A."/>
            <person name="Blattner F.R."/>
        </authorList>
    </citation>
    <scope>NUCLEOTIDE SEQUENCE [LARGE SCALE GENOMIC DNA]</scope>
    <source>
        <strain>O157:H7 / EDL933 / ATCC 700927 / EHEC</strain>
    </source>
</reference>
<reference key="2">
    <citation type="journal article" date="2001" name="DNA Res.">
        <title>Complete genome sequence of enterohemorrhagic Escherichia coli O157:H7 and genomic comparison with a laboratory strain K-12.</title>
        <authorList>
            <person name="Hayashi T."/>
            <person name="Makino K."/>
            <person name="Ohnishi M."/>
            <person name="Kurokawa K."/>
            <person name="Ishii K."/>
            <person name="Yokoyama K."/>
            <person name="Han C.-G."/>
            <person name="Ohtsubo E."/>
            <person name="Nakayama K."/>
            <person name="Murata T."/>
            <person name="Tanaka M."/>
            <person name="Tobe T."/>
            <person name="Iida T."/>
            <person name="Takami H."/>
            <person name="Honda T."/>
            <person name="Sasakawa C."/>
            <person name="Ogasawara N."/>
            <person name="Yasunaga T."/>
            <person name="Kuhara S."/>
            <person name="Shiba T."/>
            <person name="Hattori M."/>
            <person name="Shinagawa H."/>
        </authorList>
    </citation>
    <scope>NUCLEOTIDE SEQUENCE [LARGE SCALE GENOMIC DNA]</scope>
    <source>
        <strain>O157:H7 / Sakai / RIMD 0509952 / EHEC</strain>
    </source>
</reference>
<feature type="chain" id="PRO_0000227649" description="Enterobactin exporter EntS">
    <location>
        <begin position="1"/>
        <end position="416"/>
    </location>
</feature>
<feature type="topological domain" description="Cytoplasmic" evidence="1">
    <location>
        <begin position="1"/>
        <end position="21"/>
    </location>
</feature>
<feature type="transmembrane region" description="Helical" evidence="1">
    <location>
        <begin position="22"/>
        <end position="42"/>
    </location>
</feature>
<feature type="topological domain" description="Periplasmic" evidence="1">
    <location>
        <begin position="43"/>
        <end position="55"/>
    </location>
</feature>
<feature type="transmembrane region" description="Helical" evidence="1">
    <location>
        <begin position="56"/>
        <end position="76"/>
    </location>
</feature>
<feature type="topological domain" description="Cytoplasmic" evidence="1">
    <location>
        <begin position="77"/>
        <end position="83"/>
    </location>
</feature>
<feature type="transmembrane region" description="Helical" evidence="1">
    <location>
        <begin position="84"/>
        <end position="104"/>
    </location>
</feature>
<feature type="topological domain" description="Periplasmic" evidence="1">
    <location>
        <begin position="105"/>
        <end position="109"/>
    </location>
</feature>
<feature type="transmembrane region" description="Helical" evidence="1">
    <location>
        <begin position="110"/>
        <end position="130"/>
    </location>
</feature>
<feature type="topological domain" description="Cytoplasmic" evidence="1">
    <location>
        <begin position="131"/>
        <end position="156"/>
    </location>
</feature>
<feature type="transmembrane region" description="Helical" evidence="1">
    <location>
        <begin position="157"/>
        <end position="177"/>
    </location>
</feature>
<feature type="topological domain" description="Periplasmic" evidence="1">
    <location>
        <position position="178"/>
    </location>
</feature>
<feature type="transmembrane region" description="Helical" evidence="1">
    <location>
        <begin position="179"/>
        <end position="199"/>
    </location>
</feature>
<feature type="topological domain" description="Cytoplasmic" evidence="1">
    <location>
        <begin position="200"/>
        <end position="218"/>
    </location>
</feature>
<feature type="transmembrane region" description="Helical" evidence="1">
    <location>
        <begin position="219"/>
        <end position="239"/>
    </location>
</feature>
<feature type="topological domain" description="Periplasmic" evidence="1">
    <location>
        <begin position="240"/>
        <end position="256"/>
    </location>
</feature>
<feature type="transmembrane region" description="Helical" evidence="1">
    <location>
        <begin position="257"/>
        <end position="277"/>
    </location>
</feature>
<feature type="topological domain" description="Cytoplasmic" evidence="1">
    <location>
        <begin position="278"/>
        <end position="287"/>
    </location>
</feature>
<feature type="transmembrane region" description="Helical" evidence="1">
    <location>
        <begin position="288"/>
        <end position="307"/>
    </location>
</feature>
<feature type="topological domain" description="Periplasmic" evidence="1">
    <location>
        <begin position="308"/>
        <end position="313"/>
    </location>
</feature>
<feature type="transmembrane region" description="Helical" evidence="1">
    <location>
        <begin position="314"/>
        <end position="336"/>
    </location>
</feature>
<feature type="topological domain" description="Cytoplasmic" evidence="1">
    <location>
        <begin position="337"/>
        <end position="356"/>
    </location>
</feature>
<feature type="transmembrane region" description="Helical" evidence="1">
    <location>
        <begin position="357"/>
        <end position="377"/>
    </location>
</feature>
<feature type="topological domain" description="Periplasmic" evidence="1">
    <location>
        <position position="378"/>
    </location>
</feature>
<feature type="transmembrane region" description="Helical" evidence="1">
    <location>
        <begin position="379"/>
        <end position="399"/>
    </location>
</feature>
<feature type="topological domain" description="Cytoplasmic" evidence="1">
    <location>
        <begin position="400"/>
        <end position="416"/>
    </location>
</feature>
<keyword id="KW-0997">Cell inner membrane</keyword>
<keyword id="KW-1003">Cell membrane</keyword>
<keyword id="KW-0472">Membrane</keyword>
<keyword id="KW-1185">Reference proteome</keyword>
<keyword id="KW-0812">Transmembrane</keyword>
<keyword id="KW-1133">Transmembrane helix</keyword>
<keyword id="KW-0813">Transport</keyword>
<accession>Q8X534</accession>
<accession>Q7AGR5</accession>